<evidence type="ECO:0000255" key="1">
    <source>
        <dbReference type="HAMAP-Rule" id="MF_00076"/>
    </source>
</evidence>
<feature type="chain" id="PRO_0000336342" description="Imidazoleglycerol-phosphate dehydratase">
    <location>
        <begin position="1"/>
        <end position="199"/>
    </location>
</feature>
<organism>
    <name type="scientific">Roseiflexus sp. (strain RS-1)</name>
    <dbReference type="NCBI Taxonomy" id="357808"/>
    <lineage>
        <taxon>Bacteria</taxon>
        <taxon>Bacillati</taxon>
        <taxon>Chloroflexota</taxon>
        <taxon>Chloroflexia</taxon>
        <taxon>Chloroflexales</taxon>
        <taxon>Roseiflexineae</taxon>
        <taxon>Roseiflexaceae</taxon>
        <taxon>Roseiflexus</taxon>
    </lineage>
</organism>
<keyword id="KW-0028">Amino-acid biosynthesis</keyword>
<keyword id="KW-0963">Cytoplasm</keyword>
<keyword id="KW-0368">Histidine biosynthesis</keyword>
<keyword id="KW-0456">Lyase</keyword>
<sequence>MPASTRTASIERRTGETSIELTLNIDGSGMVDSATGIGFLDHMLHLFARHGLFDLKVHASGDLHVDEHHTAEDVCICLGQAFDRALGERRGLVRTAHAYVPMDEALGFVAVDLSGRPYCVVDADFVTPRVGQLGTDLIAHLFESIAIHGRMNLHARVLYGRNDHHKVEALFKALGRALDMATRIDERLGGAIPSTKGVL</sequence>
<protein>
    <recommendedName>
        <fullName evidence="1">Imidazoleglycerol-phosphate dehydratase</fullName>
        <shortName evidence="1">IGPD</shortName>
        <ecNumber evidence="1">4.2.1.19</ecNumber>
    </recommendedName>
</protein>
<accession>A5USC4</accession>
<name>HIS7_ROSS1</name>
<reference key="1">
    <citation type="submission" date="2007-04" db="EMBL/GenBank/DDBJ databases">
        <title>Complete sequence of Roseiflexus sp. RS-1.</title>
        <authorList>
            <consortium name="US DOE Joint Genome Institute"/>
            <person name="Copeland A."/>
            <person name="Lucas S."/>
            <person name="Lapidus A."/>
            <person name="Barry K."/>
            <person name="Detter J.C."/>
            <person name="Glavina del Rio T."/>
            <person name="Hammon N."/>
            <person name="Israni S."/>
            <person name="Dalin E."/>
            <person name="Tice H."/>
            <person name="Pitluck S."/>
            <person name="Chertkov O."/>
            <person name="Brettin T."/>
            <person name="Bruce D."/>
            <person name="Han C."/>
            <person name="Schmutz J."/>
            <person name="Larimer F."/>
            <person name="Land M."/>
            <person name="Hauser L."/>
            <person name="Kyrpides N."/>
            <person name="Mikhailova N."/>
            <person name="Bryant D.A."/>
            <person name="Richardson P."/>
        </authorList>
    </citation>
    <scope>NUCLEOTIDE SEQUENCE [LARGE SCALE GENOMIC DNA]</scope>
    <source>
        <strain>RS-1</strain>
    </source>
</reference>
<comment type="catalytic activity">
    <reaction evidence="1">
        <text>D-erythro-1-(imidazol-4-yl)glycerol 3-phosphate = 3-(imidazol-4-yl)-2-oxopropyl phosphate + H2O</text>
        <dbReference type="Rhea" id="RHEA:11040"/>
        <dbReference type="ChEBI" id="CHEBI:15377"/>
        <dbReference type="ChEBI" id="CHEBI:57766"/>
        <dbReference type="ChEBI" id="CHEBI:58278"/>
        <dbReference type="EC" id="4.2.1.19"/>
    </reaction>
</comment>
<comment type="pathway">
    <text evidence="1">Amino-acid biosynthesis; L-histidine biosynthesis; L-histidine from 5-phospho-alpha-D-ribose 1-diphosphate: step 6/9.</text>
</comment>
<comment type="subcellular location">
    <subcellularLocation>
        <location evidence="1">Cytoplasm</location>
    </subcellularLocation>
</comment>
<comment type="similarity">
    <text evidence="1">Belongs to the imidazoleglycerol-phosphate dehydratase family.</text>
</comment>
<dbReference type="EC" id="4.2.1.19" evidence="1"/>
<dbReference type="EMBL" id="CP000686">
    <property type="protein sequence ID" value="ABQ89527.1"/>
    <property type="molecule type" value="Genomic_DNA"/>
</dbReference>
<dbReference type="RefSeq" id="WP_011955880.1">
    <property type="nucleotide sequence ID" value="NC_009523.1"/>
</dbReference>
<dbReference type="SMR" id="A5USC4"/>
<dbReference type="STRING" id="357808.RoseRS_1120"/>
<dbReference type="KEGG" id="rrs:RoseRS_1120"/>
<dbReference type="eggNOG" id="COG0131">
    <property type="taxonomic scope" value="Bacteria"/>
</dbReference>
<dbReference type="HOGENOM" id="CLU_044308_2_0_0"/>
<dbReference type="OrthoDB" id="9790411at2"/>
<dbReference type="UniPathway" id="UPA00031">
    <property type="reaction ID" value="UER00011"/>
</dbReference>
<dbReference type="Proteomes" id="UP000006554">
    <property type="component" value="Chromosome"/>
</dbReference>
<dbReference type="GO" id="GO:0005737">
    <property type="term" value="C:cytoplasm"/>
    <property type="evidence" value="ECO:0007669"/>
    <property type="project" value="UniProtKB-SubCell"/>
</dbReference>
<dbReference type="GO" id="GO:0004424">
    <property type="term" value="F:imidazoleglycerol-phosphate dehydratase activity"/>
    <property type="evidence" value="ECO:0007669"/>
    <property type="project" value="UniProtKB-UniRule"/>
</dbReference>
<dbReference type="GO" id="GO:0000105">
    <property type="term" value="P:L-histidine biosynthetic process"/>
    <property type="evidence" value="ECO:0007669"/>
    <property type="project" value="UniProtKB-UniRule"/>
</dbReference>
<dbReference type="CDD" id="cd07914">
    <property type="entry name" value="IGPD"/>
    <property type="match status" value="1"/>
</dbReference>
<dbReference type="FunFam" id="3.30.230.40:FF:000001">
    <property type="entry name" value="Imidazoleglycerol-phosphate dehydratase HisB"/>
    <property type="match status" value="1"/>
</dbReference>
<dbReference type="FunFam" id="3.30.230.40:FF:000003">
    <property type="entry name" value="Imidazoleglycerol-phosphate dehydratase HisB"/>
    <property type="match status" value="1"/>
</dbReference>
<dbReference type="Gene3D" id="3.30.230.40">
    <property type="entry name" value="Imidazole glycerol phosphate dehydratase, domain 1"/>
    <property type="match status" value="2"/>
</dbReference>
<dbReference type="HAMAP" id="MF_00076">
    <property type="entry name" value="HisB"/>
    <property type="match status" value="1"/>
</dbReference>
<dbReference type="InterPro" id="IPR038494">
    <property type="entry name" value="IGPD_sf"/>
</dbReference>
<dbReference type="InterPro" id="IPR000807">
    <property type="entry name" value="ImidazoleglycerolP_deHydtase"/>
</dbReference>
<dbReference type="InterPro" id="IPR020565">
    <property type="entry name" value="ImidazoleglycerP_deHydtase_CS"/>
</dbReference>
<dbReference type="InterPro" id="IPR020568">
    <property type="entry name" value="Ribosomal_Su5_D2-typ_SF"/>
</dbReference>
<dbReference type="NCBIfam" id="NF002111">
    <property type="entry name" value="PRK00951.2-1"/>
    <property type="match status" value="1"/>
</dbReference>
<dbReference type="NCBIfam" id="NF002114">
    <property type="entry name" value="PRK00951.2-4"/>
    <property type="match status" value="1"/>
</dbReference>
<dbReference type="NCBIfam" id="NF002116">
    <property type="entry name" value="PRK00951.2-6"/>
    <property type="match status" value="1"/>
</dbReference>
<dbReference type="PANTHER" id="PTHR23133:SF2">
    <property type="entry name" value="IMIDAZOLEGLYCEROL-PHOSPHATE DEHYDRATASE"/>
    <property type="match status" value="1"/>
</dbReference>
<dbReference type="PANTHER" id="PTHR23133">
    <property type="entry name" value="IMIDAZOLEGLYCEROL-PHOSPHATE DEHYDRATASE HIS7"/>
    <property type="match status" value="1"/>
</dbReference>
<dbReference type="Pfam" id="PF00475">
    <property type="entry name" value="IGPD"/>
    <property type="match status" value="1"/>
</dbReference>
<dbReference type="SUPFAM" id="SSF54211">
    <property type="entry name" value="Ribosomal protein S5 domain 2-like"/>
    <property type="match status" value="2"/>
</dbReference>
<dbReference type="PROSITE" id="PS00954">
    <property type="entry name" value="IGP_DEHYDRATASE_1"/>
    <property type="match status" value="1"/>
</dbReference>
<dbReference type="PROSITE" id="PS00955">
    <property type="entry name" value="IGP_DEHYDRATASE_2"/>
    <property type="match status" value="1"/>
</dbReference>
<gene>
    <name evidence="1" type="primary">hisB</name>
    <name type="ordered locus">RoseRS_1120</name>
</gene>
<proteinExistence type="inferred from homology"/>